<accession>P19888</accession>
<organism>
    <name type="scientific">Aneurinibacillus aneurinilyticus</name>
    <name type="common">Bacillus aneurinolyticus</name>
    <dbReference type="NCBI Taxonomy" id="1391"/>
    <lineage>
        <taxon>Bacteria</taxon>
        <taxon>Bacillati</taxon>
        <taxon>Bacillota</taxon>
        <taxon>Bacilli</taxon>
        <taxon>Bacillales</taxon>
        <taxon>Paenibacillaceae</taxon>
        <taxon>Aneurinibacillus group</taxon>
        <taxon>Aneurinibacillus</taxon>
    </lineage>
</organism>
<protein>
    <recommendedName>
        <fullName evidence="4">Type II methyltransferase M.BanI</fullName>
        <shortName evidence="4">M.BanI</shortName>
        <ecNumber>2.1.1.37</ecNumber>
    </recommendedName>
    <alternativeName>
        <fullName>Cytosine-specific methyltransferase BanI</fullName>
    </alternativeName>
    <alternativeName>
        <fullName>Modification methylase BanI</fullName>
    </alternativeName>
</protein>
<evidence type="ECO:0000255" key="1">
    <source>
        <dbReference type="PROSITE-ProRule" id="PRU01016"/>
    </source>
</evidence>
<evidence type="ECO:0000255" key="2">
    <source>
        <dbReference type="PROSITE-ProRule" id="PRU10018"/>
    </source>
</evidence>
<evidence type="ECO:0000269" key="3">
    <source>
    </source>
</evidence>
<evidence type="ECO:0000303" key="4">
    <source>
    </source>
</evidence>
<evidence type="ECO:0000305" key="5">
    <source>
    </source>
</evidence>
<keyword id="KW-0903">Direct protein sequencing</keyword>
<keyword id="KW-0238">DNA-binding</keyword>
<keyword id="KW-0489">Methyltransferase</keyword>
<keyword id="KW-0680">Restriction system</keyword>
<keyword id="KW-0949">S-adenosyl-L-methionine</keyword>
<keyword id="KW-0808">Transferase</keyword>
<dbReference type="EC" id="2.1.1.37"/>
<dbReference type="EMBL" id="D00704">
    <property type="protein sequence ID" value="BAA00613.1"/>
    <property type="molecule type" value="Genomic_DNA"/>
</dbReference>
<dbReference type="PIR" id="JS0489">
    <property type="entry name" value="CTBSBA"/>
</dbReference>
<dbReference type="RefSeq" id="WP_021624992.1">
    <property type="nucleotide sequence ID" value="NZ_JBHUBK010000008.1"/>
</dbReference>
<dbReference type="SMR" id="P19888"/>
<dbReference type="OrthoDB" id="9813719at2"/>
<dbReference type="PRO" id="PR:P19888"/>
<dbReference type="GO" id="GO:0003886">
    <property type="term" value="F:DNA (cytosine-5-)-methyltransferase activity"/>
    <property type="evidence" value="ECO:0007669"/>
    <property type="project" value="UniProtKB-EC"/>
</dbReference>
<dbReference type="GO" id="GO:0003677">
    <property type="term" value="F:DNA binding"/>
    <property type="evidence" value="ECO:0007669"/>
    <property type="project" value="UniProtKB-KW"/>
</dbReference>
<dbReference type="GO" id="GO:0009307">
    <property type="term" value="P:DNA restriction-modification system"/>
    <property type="evidence" value="ECO:0007669"/>
    <property type="project" value="UniProtKB-KW"/>
</dbReference>
<dbReference type="GO" id="GO:0032259">
    <property type="term" value="P:methylation"/>
    <property type="evidence" value="ECO:0007669"/>
    <property type="project" value="UniProtKB-KW"/>
</dbReference>
<dbReference type="CDD" id="cd00315">
    <property type="entry name" value="Cyt_C5_DNA_methylase"/>
    <property type="match status" value="1"/>
</dbReference>
<dbReference type="Gene3D" id="3.90.120.10">
    <property type="entry name" value="DNA Methylase, subunit A, domain 2"/>
    <property type="match status" value="1"/>
</dbReference>
<dbReference type="Gene3D" id="3.40.50.150">
    <property type="entry name" value="Vaccinia Virus protein VP39"/>
    <property type="match status" value="1"/>
</dbReference>
<dbReference type="InterPro" id="IPR050750">
    <property type="entry name" value="C5-MTase"/>
</dbReference>
<dbReference type="InterPro" id="IPR018117">
    <property type="entry name" value="C5_DNA_meth_AS"/>
</dbReference>
<dbReference type="InterPro" id="IPR001525">
    <property type="entry name" value="C5_MeTfrase"/>
</dbReference>
<dbReference type="InterPro" id="IPR031303">
    <property type="entry name" value="C5_meth_CS"/>
</dbReference>
<dbReference type="InterPro" id="IPR029063">
    <property type="entry name" value="SAM-dependent_MTases_sf"/>
</dbReference>
<dbReference type="NCBIfam" id="TIGR00675">
    <property type="entry name" value="dcm"/>
    <property type="match status" value="1"/>
</dbReference>
<dbReference type="PANTHER" id="PTHR46098">
    <property type="entry name" value="TRNA (CYTOSINE(38)-C(5))-METHYLTRANSFERASE"/>
    <property type="match status" value="1"/>
</dbReference>
<dbReference type="PANTHER" id="PTHR46098:SF1">
    <property type="entry name" value="TRNA (CYTOSINE(38)-C(5))-METHYLTRANSFERASE"/>
    <property type="match status" value="1"/>
</dbReference>
<dbReference type="Pfam" id="PF00145">
    <property type="entry name" value="DNA_methylase"/>
    <property type="match status" value="1"/>
</dbReference>
<dbReference type="PRINTS" id="PR00105">
    <property type="entry name" value="C5METTRFRASE"/>
</dbReference>
<dbReference type="SUPFAM" id="SSF53335">
    <property type="entry name" value="S-adenosyl-L-methionine-dependent methyltransferases"/>
    <property type="match status" value="1"/>
</dbReference>
<dbReference type="PROSITE" id="PS00094">
    <property type="entry name" value="C5_MTASE_1"/>
    <property type="match status" value="1"/>
</dbReference>
<dbReference type="PROSITE" id="PS00095">
    <property type="entry name" value="C5_MTASE_2"/>
    <property type="match status" value="1"/>
</dbReference>
<dbReference type="PROSITE" id="PS51679">
    <property type="entry name" value="SAM_MT_C5"/>
    <property type="match status" value="1"/>
</dbReference>
<sequence>MKIKFVDLFAGIGGIRIGFERAAKRFELETECVLSSEIDKKACETYALNFKEEPQGDIHEITSFPEFDFLLAGFPCQPFSYAGKQQGFGDTRGTLFFEVERVLRDNRPKAFLLENVRGLVTHDKGRTLKTIISKLEELGYGVSYLLLNSSTFGVPQNRVRIYILGILGSKPKLTLTSNVGAADSHKYKNEQISLFDESYATVKDILEDSPSEKYRCSDEFIGQLSKVVGNNFELLHGYRLIDYRGGNSIHSWELGIKGDCTKEEIEFLNQLIANRRKKIYGTHQDGKALTLEQIRTFYNHDQLEVIIKSLLQKGYLREEENKFNPVCGNMSFEVFKFLDPDSISITLTSSDAHKLGVVQNNVPRRITPRECARLQGFPDDFILHSNDNFAYKQLGNSVTVKVVEKVIEDLFQNNVNELFGQMKLANVV</sequence>
<proteinExistence type="evidence at protein level"/>
<comment type="function">
    <text evidence="4 5">A methylase, recognizes the double-stranded sequence 5'-GGYRCC-3', methylates C-4 on both strands, and protects the DNA from cleavage by the BanI endonuclease.</text>
</comment>
<comment type="catalytic activity">
    <reaction evidence="2">
        <text>a 2'-deoxycytidine in DNA + S-adenosyl-L-methionine = a 5-methyl-2'-deoxycytidine in DNA + S-adenosyl-L-homocysteine + H(+)</text>
        <dbReference type="Rhea" id="RHEA:13681"/>
        <dbReference type="Rhea" id="RHEA-COMP:11369"/>
        <dbReference type="Rhea" id="RHEA-COMP:11370"/>
        <dbReference type="ChEBI" id="CHEBI:15378"/>
        <dbReference type="ChEBI" id="CHEBI:57856"/>
        <dbReference type="ChEBI" id="CHEBI:59789"/>
        <dbReference type="ChEBI" id="CHEBI:85452"/>
        <dbReference type="ChEBI" id="CHEBI:85454"/>
        <dbReference type="EC" id="2.1.1.37"/>
    </reaction>
</comment>
<comment type="subunit">
    <text evidence="3">Monomer.</text>
</comment>
<comment type="similarity">
    <text evidence="1">Belongs to the class I-like SAM-binding methyltransferase superfamily. C5-methyltransferase family.</text>
</comment>
<feature type="chain" id="PRO_0000087860" description="Type II methyltransferase M.BanI">
    <location>
        <begin position="1"/>
        <end position="428"/>
    </location>
</feature>
<feature type="domain" description="SAM-dependent MTase C5-type" evidence="1">
    <location>
        <begin position="3"/>
        <end position="417"/>
    </location>
</feature>
<feature type="active site" evidence="1 2">
    <location>
        <position position="76"/>
    </location>
</feature>
<reference key="1">
    <citation type="journal article" date="1990" name="J. Biochem.">
        <title>Cloning and nucleotide sequences of the BanI restriction-modification genes in Bacillus aneurinolyticus.</title>
        <authorList>
            <person name="Maekawa Y."/>
            <person name="Yasukawa H."/>
            <person name="Kawakami B."/>
        </authorList>
    </citation>
    <scope>NUCLEOTIDE SEQUENCE [GENOMIC DNA]</scope>
    <scope>PROTEIN SEQUENCE OF 1-15</scope>
    <scope>FUNCTION</scope>
    <scope>SUBUNIT</scope>
    <source>
        <strain>ATCC 12856 / DSM 5562 / JCM 9024 / NBRC 15521 / IAM 1077 / NRS 1589</strain>
    </source>
</reference>
<reference key="2">
    <citation type="journal article" date="2003" name="Nucleic Acids Res.">
        <title>A nomenclature for restriction enzymes, DNA methyltransferases, homing endonucleases and their genes.</title>
        <authorList>
            <person name="Roberts R.J."/>
            <person name="Belfort M."/>
            <person name="Bestor T."/>
            <person name="Bhagwat A.S."/>
            <person name="Bickle T.A."/>
            <person name="Bitinaite J."/>
            <person name="Blumenthal R.M."/>
            <person name="Degtyarev S.K."/>
            <person name="Dryden D.T."/>
            <person name="Dybvig K."/>
            <person name="Firman K."/>
            <person name="Gromova E.S."/>
            <person name="Gumport R.I."/>
            <person name="Halford S.E."/>
            <person name="Hattman S."/>
            <person name="Heitman J."/>
            <person name="Hornby D.P."/>
            <person name="Janulaitis A."/>
            <person name="Jeltsch A."/>
            <person name="Josephsen J."/>
            <person name="Kiss A."/>
            <person name="Klaenhammer T.R."/>
            <person name="Kobayashi I."/>
            <person name="Kong H."/>
            <person name="Krueger D.H."/>
            <person name="Lacks S."/>
            <person name="Marinus M.G."/>
            <person name="Miyahara M."/>
            <person name="Morgan R.D."/>
            <person name="Murray N.E."/>
            <person name="Nagaraja V."/>
            <person name="Piekarowicz A."/>
            <person name="Pingoud A."/>
            <person name="Raleigh E."/>
            <person name="Rao D.N."/>
            <person name="Reich N."/>
            <person name="Repin V.E."/>
            <person name="Selker E.U."/>
            <person name="Shaw P.C."/>
            <person name="Stein D.C."/>
            <person name="Stoddard B.L."/>
            <person name="Szybalski W."/>
            <person name="Trautner T.A."/>
            <person name="Van Etten J.L."/>
            <person name="Vitor J.M."/>
            <person name="Wilson G.G."/>
            <person name="Xu S.Y."/>
        </authorList>
    </citation>
    <scope>NOMENCLATURE</scope>
</reference>
<name>MTBA_ANEAE</name>
<gene>
    <name type="primary">banIM</name>
</gene>